<evidence type="ECO:0000255" key="1">
    <source>
        <dbReference type="HAMAP-Rule" id="MF_00558"/>
    </source>
</evidence>
<reference key="1">
    <citation type="journal article" date="2001" name="Proc. Natl. Acad. Sci. U.S.A.">
        <title>Complete genomic sequence of Pasteurella multocida Pm70.</title>
        <authorList>
            <person name="May B.J."/>
            <person name="Zhang Q."/>
            <person name="Li L.L."/>
            <person name="Paustian M.L."/>
            <person name="Whittam T.S."/>
            <person name="Kapur V."/>
        </authorList>
    </citation>
    <scope>NUCLEOTIDE SEQUENCE [LARGE SCALE GENOMIC DNA]</scope>
    <source>
        <strain>Pm70</strain>
    </source>
</reference>
<dbReference type="EC" id="6.2.1.5" evidence="1"/>
<dbReference type="EMBL" id="AE004439">
    <property type="protein sequence ID" value="AAK02364.1"/>
    <property type="molecule type" value="Genomic_DNA"/>
</dbReference>
<dbReference type="RefSeq" id="WP_010906561.1">
    <property type="nucleotide sequence ID" value="NC_002663.1"/>
</dbReference>
<dbReference type="SMR" id="Q9CNZ0"/>
<dbReference type="STRING" id="272843.PM0280"/>
<dbReference type="EnsemblBacteria" id="AAK02364">
    <property type="protein sequence ID" value="AAK02364"/>
    <property type="gene ID" value="PM0280"/>
</dbReference>
<dbReference type="KEGG" id="pmu:PM0280"/>
<dbReference type="PATRIC" id="fig|272843.6.peg.289"/>
<dbReference type="HOGENOM" id="CLU_037430_0_2_6"/>
<dbReference type="OrthoDB" id="9802602at2"/>
<dbReference type="UniPathway" id="UPA00223">
    <property type="reaction ID" value="UER00999"/>
</dbReference>
<dbReference type="Proteomes" id="UP000000809">
    <property type="component" value="Chromosome"/>
</dbReference>
<dbReference type="GO" id="GO:0005829">
    <property type="term" value="C:cytosol"/>
    <property type="evidence" value="ECO:0007669"/>
    <property type="project" value="TreeGrafter"/>
</dbReference>
<dbReference type="GO" id="GO:0042709">
    <property type="term" value="C:succinate-CoA ligase complex"/>
    <property type="evidence" value="ECO:0007669"/>
    <property type="project" value="TreeGrafter"/>
</dbReference>
<dbReference type="GO" id="GO:0005524">
    <property type="term" value="F:ATP binding"/>
    <property type="evidence" value="ECO:0007669"/>
    <property type="project" value="UniProtKB-UniRule"/>
</dbReference>
<dbReference type="GO" id="GO:0000287">
    <property type="term" value="F:magnesium ion binding"/>
    <property type="evidence" value="ECO:0007669"/>
    <property type="project" value="UniProtKB-UniRule"/>
</dbReference>
<dbReference type="GO" id="GO:0004775">
    <property type="term" value="F:succinate-CoA ligase (ADP-forming) activity"/>
    <property type="evidence" value="ECO:0007669"/>
    <property type="project" value="UniProtKB-UniRule"/>
</dbReference>
<dbReference type="GO" id="GO:0004776">
    <property type="term" value="F:succinate-CoA ligase (GDP-forming) activity"/>
    <property type="evidence" value="ECO:0007669"/>
    <property type="project" value="RHEA"/>
</dbReference>
<dbReference type="GO" id="GO:0006104">
    <property type="term" value="P:succinyl-CoA metabolic process"/>
    <property type="evidence" value="ECO:0007669"/>
    <property type="project" value="TreeGrafter"/>
</dbReference>
<dbReference type="GO" id="GO:0006099">
    <property type="term" value="P:tricarboxylic acid cycle"/>
    <property type="evidence" value="ECO:0007669"/>
    <property type="project" value="UniProtKB-UniRule"/>
</dbReference>
<dbReference type="FunFam" id="3.30.1490.20:FF:000002">
    <property type="entry name" value="Succinate--CoA ligase [ADP-forming] subunit beta"/>
    <property type="match status" value="1"/>
</dbReference>
<dbReference type="FunFam" id="3.30.470.20:FF:000002">
    <property type="entry name" value="Succinate--CoA ligase [ADP-forming] subunit beta"/>
    <property type="match status" value="1"/>
</dbReference>
<dbReference type="FunFam" id="3.40.50.261:FF:000001">
    <property type="entry name" value="Succinate--CoA ligase [ADP-forming] subunit beta"/>
    <property type="match status" value="1"/>
</dbReference>
<dbReference type="Gene3D" id="3.30.1490.20">
    <property type="entry name" value="ATP-grasp fold, A domain"/>
    <property type="match status" value="1"/>
</dbReference>
<dbReference type="Gene3D" id="3.30.470.20">
    <property type="entry name" value="ATP-grasp fold, B domain"/>
    <property type="match status" value="1"/>
</dbReference>
<dbReference type="Gene3D" id="3.40.50.261">
    <property type="entry name" value="Succinyl-CoA synthetase domains"/>
    <property type="match status" value="1"/>
</dbReference>
<dbReference type="HAMAP" id="MF_00558">
    <property type="entry name" value="Succ_CoA_beta"/>
    <property type="match status" value="1"/>
</dbReference>
<dbReference type="InterPro" id="IPR011761">
    <property type="entry name" value="ATP-grasp"/>
</dbReference>
<dbReference type="InterPro" id="IPR013650">
    <property type="entry name" value="ATP-grasp_succ-CoA_synth-type"/>
</dbReference>
<dbReference type="InterPro" id="IPR013815">
    <property type="entry name" value="ATP_grasp_subdomain_1"/>
</dbReference>
<dbReference type="InterPro" id="IPR017866">
    <property type="entry name" value="Succ-CoA_synthase_bsu_CS"/>
</dbReference>
<dbReference type="InterPro" id="IPR005811">
    <property type="entry name" value="SUCC_ACL_C"/>
</dbReference>
<dbReference type="InterPro" id="IPR005809">
    <property type="entry name" value="Succ_CoA_ligase-like_bsu"/>
</dbReference>
<dbReference type="InterPro" id="IPR016102">
    <property type="entry name" value="Succinyl-CoA_synth-like"/>
</dbReference>
<dbReference type="NCBIfam" id="NF001913">
    <property type="entry name" value="PRK00696.1"/>
    <property type="match status" value="1"/>
</dbReference>
<dbReference type="NCBIfam" id="TIGR01016">
    <property type="entry name" value="sucCoAbeta"/>
    <property type="match status" value="1"/>
</dbReference>
<dbReference type="PANTHER" id="PTHR11815:SF10">
    <property type="entry name" value="SUCCINATE--COA LIGASE [GDP-FORMING] SUBUNIT BETA, MITOCHONDRIAL"/>
    <property type="match status" value="1"/>
</dbReference>
<dbReference type="PANTHER" id="PTHR11815">
    <property type="entry name" value="SUCCINYL-COA SYNTHETASE BETA CHAIN"/>
    <property type="match status" value="1"/>
</dbReference>
<dbReference type="Pfam" id="PF08442">
    <property type="entry name" value="ATP-grasp_2"/>
    <property type="match status" value="1"/>
</dbReference>
<dbReference type="Pfam" id="PF00549">
    <property type="entry name" value="Ligase_CoA"/>
    <property type="match status" value="1"/>
</dbReference>
<dbReference type="PIRSF" id="PIRSF001554">
    <property type="entry name" value="SucCS_beta"/>
    <property type="match status" value="1"/>
</dbReference>
<dbReference type="SUPFAM" id="SSF56059">
    <property type="entry name" value="Glutathione synthetase ATP-binding domain-like"/>
    <property type="match status" value="1"/>
</dbReference>
<dbReference type="SUPFAM" id="SSF52210">
    <property type="entry name" value="Succinyl-CoA synthetase domains"/>
    <property type="match status" value="1"/>
</dbReference>
<dbReference type="PROSITE" id="PS50975">
    <property type="entry name" value="ATP_GRASP"/>
    <property type="match status" value="1"/>
</dbReference>
<dbReference type="PROSITE" id="PS01217">
    <property type="entry name" value="SUCCINYL_COA_LIG_3"/>
    <property type="match status" value="1"/>
</dbReference>
<keyword id="KW-0067">ATP-binding</keyword>
<keyword id="KW-0436">Ligase</keyword>
<keyword id="KW-0460">Magnesium</keyword>
<keyword id="KW-0479">Metal-binding</keyword>
<keyword id="KW-0547">Nucleotide-binding</keyword>
<keyword id="KW-1185">Reference proteome</keyword>
<keyword id="KW-0816">Tricarboxylic acid cycle</keyword>
<feature type="chain" id="PRO_0000102843" description="Succinate--CoA ligase [ADP-forming] subunit beta">
    <location>
        <begin position="1"/>
        <end position="388"/>
    </location>
</feature>
<feature type="domain" description="ATP-grasp" evidence="1">
    <location>
        <begin position="9"/>
        <end position="244"/>
    </location>
</feature>
<feature type="binding site" evidence="1">
    <location>
        <position position="46"/>
    </location>
    <ligand>
        <name>ATP</name>
        <dbReference type="ChEBI" id="CHEBI:30616"/>
    </ligand>
</feature>
<feature type="binding site" evidence="1">
    <location>
        <begin position="53"/>
        <end position="55"/>
    </location>
    <ligand>
        <name>ATP</name>
        <dbReference type="ChEBI" id="CHEBI:30616"/>
    </ligand>
</feature>
<feature type="binding site" evidence="1">
    <location>
        <position position="99"/>
    </location>
    <ligand>
        <name>ATP</name>
        <dbReference type="ChEBI" id="CHEBI:30616"/>
    </ligand>
</feature>
<feature type="binding site" evidence="1">
    <location>
        <position position="102"/>
    </location>
    <ligand>
        <name>ATP</name>
        <dbReference type="ChEBI" id="CHEBI:30616"/>
    </ligand>
</feature>
<feature type="binding site" evidence="1">
    <location>
        <position position="107"/>
    </location>
    <ligand>
        <name>ATP</name>
        <dbReference type="ChEBI" id="CHEBI:30616"/>
    </ligand>
</feature>
<feature type="binding site" evidence="1">
    <location>
        <position position="199"/>
    </location>
    <ligand>
        <name>Mg(2+)</name>
        <dbReference type="ChEBI" id="CHEBI:18420"/>
    </ligand>
</feature>
<feature type="binding site" evidence="1">
    <location>
        <position position="213"/>
    </location>
    <ligand>
        <name>Mg(2+)</name>
        <dbReference type="ChEBI" id="CHEBI:18420"/>
    </ligand>
</feature>
<feature type="binding site" evidence="1">
    <location>
        <position position="264"/>
    </location>
    <ligand>
        <name>substrate</name>
        <note>ligand shared with subunit alpha</note>
    </ligand>
</feature>
<feature type="binding site" evidence="1">
    <location>
        <begin position="321"/>
        <end position="323"/>
    </location>
    <ligand>
        <name>substrate</name>
        <note>ligand shared with subunit alpha</note>
    </ligand>
</feature>
<organism>
    <name type="scientific">Pasteurella multocida (strain Pm70)</name>
    <dbReference type="NCBI Taxonomy" id="272843"/>
    <lineage>
        <taxon>Bacteria</taxon>
        <taxon>Pseudomonadati</taxon>
        <taxon>Pseudomonadota</taxon>
        <taxon>Gammaproteobacteria</taxon>
        <taxon>Pasteurellales</taxon>
        <taxon>Pasteurellaceae</taxon>
        <taxon>Pasteurella</taxon>
    </lineage>
</organism>
<sequence>MNLHEYQAKQIFAEYQLPVGKGYACKSADEAADAIKKLNGDVWVAKCQVHAGGRGKAGGVKLVRNEAEVRAFADQWLGQRLVTFQTDVNGQPVNTLYVEEGSSIARELYLGAVLDRASQRVVFMVSTEGGVNIEEVAEKTPHLLHKMAIDPLTGGMPYQGRELAFKLGLKGDQIKQFAHIFVQMAKMFVEKDLALLEVNPLVVTKEGNLLCLDAKIVVDSNALYRQPALKAMQDPSQEDPREALAESHQLNYVALEGNIGCMVNGAGLAMGTMDIIKLHGGQPANFLDVGGGATKERVAEAFKIILSDSAVKAVLVNIFGGIVRCDLIAEGIIAAVNEVGVNVPVVVRLEGNNAPLGREILANSGVNIIAANTLTDAAIQAVKAAEGK</sequence>
<accession>Q9CNZ0</accession>
<comment type="function">
    <text evidence="1">Succinyl-CoA synthetase functions in the citric acid cycle (TCA), coupling the hydrolysis of succinyl-CoA to the synthesis of either ATP or GTP and thus represents the only step of substrate-level phosphorylation in the TCA. The beta subunit provides nucleotide specificity of the enzyme and binds the substrate succinate, while the binding sites for coenzyme A and phosphate are found in the alpha subunit.</text>
</comment>
<comment type="catalytic activity">
    <reaction evidence="1">
        <text>succinate + ATP + CoA = succinyl-CoA + ADP + phosphate</text>
        <dbReference type="Rhea" id="RHEA:17661"/>
        <dbReference type="ChEBI" id="CHEBI:30031"/>
        <dbReference type="ChEBI" id="CHEBI:30616"/>
        <dbReference type="ChEBI" id="CHEBI:43474"/>
        <dbReference type="ChEBI" id="CHEBI:57287"/>
        <dbReference type="ChEBI" id="CHEBI:57292"/>
        <dbReference type="ChEBI" id="CHEBI:456216"/>
        <dbReference type="EC" id="6.2.1.5"/>
    </reaction>
    <physiologicalReaction direction="right-to-left" evidence="1">
        <dbReference type="Rhea" id="RHEA:17663"/>
    </physiologicalReaction>
</comment>
<comment type="catalytic activity">
    <reaction evidence="1">
        <text>GTP + succinate + CoA = succinyl-CoA + GDP + phosphate</text>
        <dbReference type="Rhea" id="RHEA:22120"/>
        <dbReference type="ChEBI" id="CHEBI:30031"/>
        <dbReference type="ChEBI" id="CHEBI:37565"/>
        <dbReference type="ChEBI" id="CHEBI:43474"/>
        <dbReference type="ChEBI" id="CHEBI:57287"/>
        <dbReference type="ChEBI" id="CHEBI:57292"/>
        <dbReference type="ChEBI" id="CHEBI:58189"/>
    </reaction>
    <physiologicalReaction direction="right-to-left" evidence="1">
        <dbReference type="Rhea" id="RHEA:22122"/>
    </physiologicalReaction>
</comment>
<comment type="cofactor">
    <cofactor evidence="1">
        <name>Mg(2+)</name>
        <dbReference type="ChEBI" id="CHEBI:18420"/>
    </cofactor>
    <text evidence="1">Binds 1 Mg(2+) ion per subunit.</text>
</comment>
<comment type="pathway">
    <text evidence="1">Carbohydrate metabolism; tricarboxylic acid cycle; succinate from succinyl-CoA (ligase route): step 1/1.</text>
</comment>
<comment type="subunit">
    <text evidence="1">Heterotetramer of two alpha and two beta subunits.</text>
</comment>
<comment type="similarity">
    <text evidence="1">Belongs to the succinate/malate CoA ligase beta subunit family.</text>
</comment>
<protein>
    <recommendedName>
        <fullName evidence="1">Succinate--CoA ligase [ADP-forming] subunit beta</fullName>
        <ecNumber evidence="1">6.2.1.5</ecNumber>
    </recommendedName>
    <alternativeName>
        <fullName evidence="1">Succinyl-CoA synthetase subunit beta</fullName>
        <shortName evidence="1">SCS-beta</shortName>
    </alternativeName>
</protein>
<proteinExistence type="inferred from homology"/>
<gene>
    <name evidence="1" type="primary">sucC</name>
    <name type="ordered locus">PM0280</name>
</gene>
<name>SUCC_PASMU</name>